<sequence>MCIAMAPRTLLLLIXCQLVFGFNEPLNIVSHLNDDWFLFGDSRSDCTYVENNGHPKLDWLDLDPKLCNSGKISAKSGNSLFRSFHFTDFYNYTGEGDQIVFYEGVNFSPSHGFKCLAHGDNKRWMGNKARFYARVYEKMAQYRSLSFVNVSYAYGGNAKPASICKDNTLTLNNPTFISKESNYVDYYYESEANFTLEGCDEFIVPLCGFNGHSKGSSSDAANKYYTDSQSYYNMDIGVLYGFNSTLDVGNTAKDPGLDLTCRYLALTPGNYKAVSLEYLLSLPSKAICLHKTKRFMPVQVVDSRWSSIRQSDNMTAAACQLPYCFFRNTSANYSGGTHDAHHGDFHFRQLLSGLLYNVSCIAQQGAFLYNNVSSSWPAYGYGHCPTAANIGYMAPVCIYDPLPVILLGVLLGIAVLIIVFLNVLFYDG</sequence>
<feature type="signal peptide" evidence="1">
    <location>
        <begin position="1"/>
        <end position="19"/>
    </location>
</feature>
<feature type="chain" id="PRO_0000037145" description="Hemagglutinin-esterase" evidence="1">
    <location>
        <begin position="20"/>
        <end position="428"/>
    </location>
</feature>
<feature type="topological domain" description="Virion surface" evidence="1">
    <location>
        <begin position="20"/>
        <end position="404"/>
    </location>
</feature>
<feature type="transmembrane region" description="Helical" evidence="1">
    <location>
        <begin position="405"/>
        <end position="425"/>
    </location>
</feature>
<feature type="topological domain" description="Intravirion" evidence="1">
    <location>
        <begin position="426"/>
        <end position="428"/>
    </location>
</feature>
<feature type="region of interest" description="Esterase domain 1" evidence="1">
    <location>
        <begin position="9"/>
        <end position="129"/>
    </location>
</feature>
<feature type="region of interest" description="Receptor binding" evidence="1">
    <location>
        <begin position="130"/>
        <end position="278"/>
    </location>
</feature>
<feature type="region of interest" description="Esterase domain 2" evidence="1">
    <location>
        <begin position="279"/>
        <end position="392"/>
    </location>
</feature>
<feature type="active site" description="Nucleophile" evidence="1">
    <location>
        <position position="42"/>
    </location>
</feature>
<feature type="active site" description="Charge relay system" evidence="1">
    <location>
        <position position="339"/>
    </location>
</feature>
<feature type="active site" description="Charge relay system" evidence="1">
    <location>
        <position position="342"/>
    </location>
</feature>
<feature type="glycosylation site" description="N-linked (GlcNAc...) asparagine; by host" evidence="1">
    <location>
        <position position="91"/>
    </location>
</feature>
<feature type="glycosylation site" description="N-linked (GlcNAc...) asparagine; by host" evidence="1">
    <location>
        <position position="149"/>
    </location>
</feature>
<feature type="glycosylation site" description="N-linked (GlcNAc...) asparagine; by host" evidence="1">
    <location>
        <position position="193"/>
    </location>
</feature>
<feature type="glycosylation site" description="N-linked (GlcNAc...) asparagine; by host" evidence="1">
    <location>
        <position position="243"/>
    </location>
</feature>
<feature type="glycosylation site" description="N-linked (GlcNAc...) asparagine; by host" evidence="1">
    <location>
        <position position="313"/>
    </location>
</feature>
<feature type="glycosylation site" description="N-linked (GlcNAc...) asparagine; by host" evidence="1">
    <location>
        <position position="328"/>
    </location>
</feature>
<feature type="glycosylation site" description="N-linked (GlcNAc...) asparagine; by host" evidence="1">
    <location>
        <position position="332"/>
    </location>
</feature>
<feature type="glycosylation site" description="N-linked (GlcNAc...) asparagine; by host" evidence="1">
    <location>
        <position position="357"/>
    </location>
</feature>
<feature type="glycosylation site" description="N-linked (GlcNAc...) asparagine; by host" evidence="1">
    <location>
        <position position="371"/>
    </location>
</feature>
<feature type="disulfide bond" evidence="1">
    <location>
        <begin position="46"/>
        <end position="67"/>
    </location>
</feature>
<feature type="disulfide bond" evidence="1">
    <location>
        <begin position="115"/>
        <end position="164"/>
    </location>
</feature>
<feature type="disulfide bond" evidence="1">
    <location>
        <begin position="199"/>
        <end position="288"/>
    </location>
</feature>
<feature type="disulfide bond" evidence="1">
    <location>
        <begin position="207"/>
        <end position="261"/>
    </location>
</feature>
<feature type="disulfide bond" evidence="1">
    <location>
        <begin position="319"/>
        <end position="324"/>
    </location>
</feature>
<feature type="disulfide bond" evidence="1">
    <location>
        <begin position="360"/>
        <end position="384"/>
    </location>
</feature>
<organismHost>
    <name type="scientific">Mus musculus</name>
    <name type="common">Mouse</name>
    <dbReference type="NCBI Taxonomy" id="10090"/>
</organismHost>
<protein>
    <recommendedName>
        <fullName evidence="1">Hemagglutinin-esterase</fullName>
        <shortName evidence="1">HE protein</shortName>
        <ecNumber evidence="1">3.1.1.53</ecNumber>
    </recommendedName>
    <alternativeName>
        <fullName evidence="1">E3 glycoprotein</fullName>
    </alternativeName>
</protein>
<gene>
    <name evidence="1" type="primary">HE</name>
    <name type="ORF">2b</name>
</gene>
<reference key="1">
    <citation type="journal article" date="1988" name="Virology">
        <title>Sequence of mouse hepatitis virus A59 mRNA 2: indications for RNA recombination between coronaviruses and influenza C virus.</title>
        <authorList>
            <person name="Luytjes W."/>
            <person name="Bredenbeek P.J."/>
            <person name="Noten A.F.H."/>
            <person name="Horzinek M.C."/>
            <person name="Spaan W.J.M."/>
        </authorList>
    </citation>
    <scope>NUCLEOTIDE SEQUENCE [GENOMIC RNA]</scope>
</reference>
<reference key="2">
    <citation type="journal article" date="1997" name="Virology">
        <title>Altered pathogenesis of a mutant of the murine coronavirus MHV-A59 is associated with a Q159L amino acid substitution in the spike protein.</title>
        <authorList>
            <person name="Leparc-Goffart I."/>
            <person name="Hingley S.T."/>
            <person name="Chua M.M."/>
            <person name="Jiang X."/>
            <person name="Lavi E."/>
            <person name="Weiss S.R."/>
        </authorList>
    </citation>
    <scope>NUCLEOTIDE SEQUENCE [GENOMIC RNA]</scope>
    <source>
        <strain>Isolate C12 mutant</strain>
    </source>
</reference>
<keyword id="KW-1015">Disulfide bond</keyword>
<keyword id="KW-0325">Glycoprotein</keyword>
<keyword id="KW-0348">Hemagglutinin</keyword>
<keyword id="KW-1032">Host cell membrane</keyword>
<keyword id="KW-1043">Host membrane</keyword>
<keyword id="KW-0378">Hydrolase</keyword>
<keyword id="KW-0472">Membrane</keyword>
<keyword id="KW-1185">Reference proteome</keyword>
<keyword id="KW-0732">Signal</keyword>
<keyword id="KW-0812">Transmembrane</keyword>
<keyword id="KW-1133">Transmembrane helix</keyword>
<keyword id="KW-0261">Viral envelope protein</keyword>
<keyword id="KW-0946">Virion</keyword>
<evidence type="ECO:0000255" key="1">
    <source>
        <dbReference type="HAMAP-Rule" id="MF_04207"/>
    </source>
</evidence>
<organism>
    <name type="scientific">Murine coronavirus (strain A59)</name>
    <name type="common">MHV-A59</name>
    <name type="synonym">Murine hepatitis virus</name>
    <dbReference type="NCBI Taxonomy" id="11142"/>
    <lineage>
        <taxon>Viruses</taxon>
        <taxon>Riboviria</taxon>
        <taxon>Orthornavirae</taxon>
        <taxon>Pisuviricota</taxon>
        <taxon>Pisoniviricetes</taxon>
        <taxon>Nidovirales</taxon>
        <taxon>Cornidovirineae</taxon>
        <taxon>Coronaviridae</taxon>
        <taxon>Orthocoronavirinae</taxon>
        <taxon>Betacoronavirus</taxon>
        <taxon>Embecovirus</taxon>
        <taxon>Murine coronavirus</taxon>
    </lineage>
</organism>
<proteinExistence type="inferred from homology"/>
<name>HEMA_CVMA5</name>
<comment type="function">
    <text evidence="1">Structural protein that makes short spikes at the surface of the virus. Contains receptor binding and receptor-destroying activities. Mediates de-O-acetylation of N-acetyl-4-O-acetylneuraminic acid, which is probably the receptor determinant recognized by the virus on the surface of erythrocytes and susceptible cells. This receptor-destroying activity is important for virus release as it probably helps preventing self-aggregation and ensures the efficient spread of the progeny virus from cell to cell. May serve as a secondary viral attachment protein for initiating infection, the spike protein being the major one. May become a target for both the humoral and the cellular branches of the immune system.</text>
</comment>
<comment type="catalytic activity">
    <reaction evidence="1">
        <text>N-acetyl-9-O-acetylneuraminate + H2O = N-acetylneuraminate + acetate + H(+)</text>
        <dbReference type="Rhea" id="RHEA:22600"/>
        <dbReference type="ChEBI" id="CHEBI:15377"/>
        <dbReference type="ChEBI" id="CHEBI:15378"/>
        <dbReference type="ChEBI" id="CHEBI:28999"/>
        <dbReference type="ChEBI" id="CHEBI:30089"/>
        <dbReference type="ChEBI" id="CHEBI:35418"/>
        <dbReference type="EC" id="3.1.1.53"/>
    </reaction>
</comment>
<comment type="catalytic activity">
    <reaction evidence="1">
        <text>N-acetyl-4-O-acetylneuraminate + H2O = N-acetylneuraminate + acetate + H(+)</text>
        <dbReference type="Rhea" id="RHEA:25564"/>
        <dbReference type="ChEBI" id="CHEBI:15377"/>
        <dbReference type="ChEBI" id="CHEBI:15378"/>
        <dbReference type="ChEBI" id="CHEBI:29006"/>
        <dbReference type="ChEBI" id="CHEBI:30089"/>
        <dbReference type="ChEBI" id="CHEBI:35418"/>
        <dbReference type="EC" id="3.1.1.53"/>
    </reaction>
</comment>
<comment type="subunit">
    <text evidence="1">Homodimer; disulfide-linked. Forms a complex with the M protein in the pre-Golgi. Associates then with S-M complex to form a ternary complex S-M-HE.</text>
</comment>
<comment type="subcellular location">
    <subcellularLocation>
        <location evidence="1">Virion membrane</location>
        <topology evidence="1">Single-pass type I membrane protein</topology>
    </subcellularLocation>
    <subcellularLocation>
        <location evidence="1">Host cell membrane</location>
        <topology evidence="1">Single-pass type I membrane protein</topology>
    </subcellularLocation>
    <text evidence="1">In infected cells becomes incorporated into the envelope of virions during virus assembly at the endoplasmic reticulum and cis Golgi. However, some may escape incorporation into virions and subsequently migrate to the cell surface.</text>
</comment>
<comment type="PTM">
    <text>N-glycosylated in the RER.</text>
</comment>
<comment type="PTM">
    <text evidence="1">N-glycosylated in the host RER.</text>
</comment>
<comment type="miscellaneous">
    <text>Readthrough of the terminator UGA may occur between the codons for Ile-14 and Cys-16.</text>
</comment>
<comment type="similarity">
    <text evidence="1">Belongs to the influenza type C/coronaviruses hemagglutinin-esterase family.</text>
</comment>
<comment type="sequence caution">
    <conflict type="frameshift">
        <sequence resource="EMBL" id="AF029248"/>
    </conflict>
</comment>
<accession>P31615</accession>
<dbReference type="EC" id="3.1.1.53" evidence="1"/>
<dbReference type="EMBL" id="M23256">
    <property type="protein sequence ID" value="AAA46449.1"/>
    <property type="status" value="ALT_SEQ"/>
    <property type="molecule type" value="Genomic_RNA"/>
</dbReference>
<dbReference type="EMBL" id="AF029248">
    <property type="status" value="NOT_ANNOTATED_CDS"/>
    <property type="molecule type" value="Genomic_RNA"/>
</dbReference>
<dbReference type="PIR" id="B31165">
    <property type="entry name" value="HMIHMH"/>
</dbReference>
<dbReference type="GlyCosmos" id="P31615">
    <property type="glycosylation" value="9 sites, No reported glycans"/>
</dbReference>
<dbReference type="Proteomes" id="UP000007192">
    <property type="component" value="Segment"/>
</dbReference>
<dbReference type="GO" id="GO:0020002">
    <property type="term" value="C:host cell plasma membrane"/>
    <property type="evidence" value="ECO:0007669"/>
    <property type="project" value="UniProtKB-SubCell"/>
</dbReference>
<dbReference type="GO" id="GO:0016020">
    <property type="term" value="C:membrane"/>
    <property type="evidence" value="ECO:0007669"/>
    <property type="project" value="UniProtKB-UniRule"/>
</dbReference>
<dbReference type="GO" id="GO:0019031">
    <property type="term" value="C:viral envelope"/>
    <property type="evidence" value="ECO:0007669"/>
    <property type="project" value="UniProtKB-UniRule"/>
</dbReference>
<dbReference type="GO" id="GO:0055036">
    <property type="term" value="C:virion membrane"/>
    <property type="evidence" value="ECO:0007669"/>
    <property type="project" value="UniProtKB-SubCell"/>
</dbReference>
<dbReference type="GO" id="GO:0046789">
    <property type="term" value="F:host cell surface receptor binding"/>
    <property type="evidence" value="ECO:0007669"/>
    <property type="project" value="UniProtKB-UniRule"/>
</dbReference>
<dbReference type="GO" id="GO:0106331">
    <property type="term" value="F:sialate 4-O-acetylesterase activity"/>
    <property type="evidence" value="ECO:0007669"/>
    <property type="project" value="RHEA"/>
</dbReference>
<dbReference type="GO" id="GO:0106330">
    <property type="term" value="F:sialate 9-O-acetylesterase activity"/>
    <property type="evidence" value="ECO:0007669"/>
    <property type="project" value="RHEA"/>
</dbReference>
<dbReference type="GO" id="GO:0001681">
    <property type="term" value="F:sialate O-acetylesterase activity"/>
    <property type="evidence" value="ECO:0000250"/>
    <property type="project" value="UniProtKB"/>
</dbReference>
<dbReference type="GO" id="GO:0019064">
    <property type="term" value="P:fusion of virus membrane with host plasma membrane"/>
    <property type="evidence" value="ECO:0007669"/>
    <property type="project" value="UniProtKB-UniRule"/>
</dbReference>
<dbReference type="HAMAP" id="MF_04207">
    <property type="entry name" value="BETA_CORONA_HE"/>
    <property type="match status" value="1"/>
</dbReference>
<dbReference type="InterPro" id="IPR008980">
    <property type="entry name" value="Capsid_hemagglutn"/>
</dbReference>
<dbReference type="InterPro" id="IPR042545">
    <property type="entry name" value="HEMA"/>
</dbReference>
<dbReference type="InterPro" id="IPR007142">
    <property type="entry name" value="Hemagglutn-estrase_core"/>
</dbReference>
<dbReference type="InterPro" id="IPR003860">
    <property type="entry name" value="Hemagglutn-estrase_hemagglutn"/>
</dbReference>
<dbReference type="Pfam" id="PF03996">
    <property type="entry name" value="Hema_esterase"/>
    <property type="match status" value="1"/>
</dbReference>
<dbReference type="Pfam" id="PF02710">
    <property type="entry name" value="Hema_HEFG"/>
    <property type="match status" value="1"/>
</dbReference>
<dbReference type="SUPFAM" id="SSF52266">
    <property type="entry name" value="SGNH hydrolase"/>
    <property type="match status" value="1"/>
</dbReference>
<dbReference type="SUPFAM" id="SSF49818">
    <property type="entry name" value="Viral protein domain"/>
    <property type="match status" value="1"/>
</dbReference>